<gene>
    <name evidence="1" type="primary">hemA</name>
    <name type="ordered locus">EcHS_A1315</name>
</gene>
<feature type="chain" id="PRO_1000057575" description="Glutamyl-tRNA reductase">
    <location>
        <begin position="1"/>
        <end position="418"/>
    </location>
</feature>
<feature type="active site" description="Nucleophile" evidence="1">
    <location>
        <position position="50"/>
    </location>
</feature>
<feature type="binding site" evidence="1">
    <location>
        <begin position="49"/>
        <end position="52"/>
    </location>
    <ligand>
        <name>substrate</name>
    </ligand>
</feature>
<feature type="binding site" evidence="1">
    <location>
        <position position="109"/>
    </location>
    <ligand>
        <name>substrate</name>
    </ligand>
</feature>
<feature type="binding site" evidence="1">
    <location>
        <begin position="114"/>
        <end position="116"/>
    </location>
    <ligand>
        <name>substrate</name>
    </ligand>
</feature>
<feature type="binding site" evidence="1">
    <location>
        <position position="120"/>
    </location>
    <ligand>
        <name>substrate</name>
    </ligand>
</feature>
<feature type="binding site" evidence="1">
    <location>
        <begin position="189"/>
        <end position="194"/>
    </location>
    <ligand>
        <name>NADP(+)</name>
        <dbReference type="ChEBI" id="CHEBI:58349"/>
    </ligand>
</feature>
<feature type="site" description="Important for activity" evidence="1">
    <location>
        <position position="99"/>
    </location>
</feature>
<keyword id="KW-0521">NADP</keyword>
<keyword id="KW-0560">Oxidoreductase</keyword>
<keyword id="KW-0627">Porphyrin biosynthesis</keyword>
<name>HEM1_ECOHS</name>
<accession>A7ZZE6</accession>
<dbReference type="EC" id="1.2.1.70" evidence="1"/>
<dbReference type="EMBL" id="CP000802">
    <property type="protein sequence ID" value="ABV05650.1"/>
    <property type="molecule type" value="Genomic_DNA"/>
</dbReference>
<dbReference type="RefSeq" id="WP_001295619.1">
    <property type="nucleotide sequence ID" value="NC_009800.1"/>
</dbReference>
<dbReference type="SMR" id="A7ZZE6"/>
<dbReference type="KEGG" id="ecx:EcHS_A1315"/>
<dbReference type="HOGENOM" id="CLU_035113_2_2_6"/>
<dbReference type="UniPathway" id="UPA00251">
    <property type="reaction ID" value="UER00316"/>
</dbReference>
<dbReference type="GO" id="GO:0008883">
    <property type="term" value="F:glutamyl-tRNA reductase activity"/>
    <property type="evidence" value="ECO:0007669"/>
    <property type="project" value="UniProtKB-UniRule"/>
</dbReference>
<dbReference type="GO" id="GO:0050661">
    <property type="term" value="F:NADP binding"/>
    <property type="evidence" value="ECO:0007669"/>
    <property type="project" value="InterPro"/>
</dbReference>
<dbReference type="GO" id="GO:0019353">
    <property type="term" value="P:protoporphyrinogen IX biosynthetic process from glutamate"/>
    <property type="evidence" value="ECO:0007669"/>
    <property type="project" value="TreeGrafter"/>
</dbReference>
<dbReference type="CDD" id="cd05213">
    <property type="entry name" value="NAD_bind_Glutamyl_tRNA_reduct"/>
    <property type="match status" value="1"/>
</dbReference>
<dbReference type="FunFam" id="3.30.460.30:FF:000001">
    <property type="entry name" value="Glutamyl-tRNA reductase"/>
    <property type="match status" value="1"/>
</dbReference>
<dbReference type="FunFam" id="3.40.50.720:FF:000031">
    <property type="entry name" value="Glutamyl-tRNA reductase"/>
    <property type="match status" value="1"/>
</dbReference>
<dbReference type="Gene3D" id="3.30.460.30">
    <property type="entry name" value="Glutamyl-tRNA reductase, N-terminal domain"/>
    <property type="match status" value="1"/>
</dbReference>
<dbReference type="Gene3D" id="3.40.50.720">
    <property type="entry name" value="NAD(P)-binding Rossmann-like Domain"/>
    <property type="match status" value="1"/>
</dbReference>
<dbReference type="HAMAP" id="MF_00087">
    <property type="entry name" value="Glu_tRNA_reductase"/>
    <property type="match status" value="1"/>
</dbReference>
<dbReference type="InterPro" id="IPR000343">
    <property type="entry name" value="4pyrrol_synth_GluRdtase"/>
</dbReference>
<dbReference type="InterPro" id="IPR015896">
    <property type="entry name" value="4pyrrol_synth_GluRdtase_dimer"/>
</dbReference>
<dbReference type="InterPro" id="IPR015895">
    <property type="entry name" value="4pyrrol_synth_GluRdtase_N"/>
</dbReference>
<dbReference type="InterPro" id="IPR018214">
    <property type="entry name" value="GluRdtase_CS"/>
</dbReference>
<dbReference type="InterPro" id="IPR036453">
    <property type="entry name" value="GluRdtase_dimer_dom_sf"/>
</dbReference>
<dbReference type="InterPro" id="IPR036343">
    <property type="entry name" value="GluRdtase_N_sf"/>
</dbReference>
<dbReference type="InterPro" id="IPR036291">
    <property type="entry name" value="NAD(P)-bd_dom_sf"/>
</dbReference>
<dbReference type="InterPro" id="IPR006151">
    <property type="entry name" value="Shikm_DH/Glu-tRNA_Rdtase"/>
</dbReference>
<dbReference type="NCBIfam" id="TIGR01035">
    <property type="entry name" value="hemA"/>
    <property type="match status" value="1"/>
</dbReference>
<dbReference type="PANTHER" id="PTHR43013">
    <property type="entry name" value="GLUTAMYL-TRNA REDUCTASE"/>
    <property type="match status" value="1"/>
</dbReference>
<dbReference type="PANTHER" id="PTHR43013:SF1">
    <property type="entry name" value="GLUTAMYL-TRNA REDUCTASE"/>
    <property type="match status" value="1"/>
</dbReference>
<dbReference type="Pfam" id="PF00745">
    <property type="entry name" value="GlutR_dimer"/>
    <property type="match status" value="1"/>
</dbReference>
<dbReference type="Pfam" id="PF05201">
    <property type="entry name" value="GlutR_N"/>
    <property type="match status" value="1"/>
</dbReference>
<dbReference type="Pfam" id="PF01488">
    <property type="entry name" value="Shikimate_DH"/>
    <property type="match status" value="1"/>
</dbReference>
<dbReference type="PIRSF" id="PIRSF000445">
    <property type="entry name" value="4pyrrol_synth_GluRdtase"/>
    <property type="match status" value="1"/>
</dbReference>
<dbReference type="SUPFAM" id="SSF69742">
    <property type="entry name" value="Glutamyl tRNA-reductase catalytic, N-terminal domain"/>
    <property type="match status" value="1"/>
</dbReference>
<dbReference type="SUPFAM" id="SSF69075">
    <property type="entry name" value="Glutamyl tRNA-reductase dimerization domain"/>
    <property type="match status" value="1"/>
</dbReference>
<dbReference type="SUPFAM" id="SSF51735">
    <property type="entry name" value="NAD(P)-binding Rossmann-fold domains"/>
    <property type="match status" value="1"/>
</dbReference>
<dbReference type="PROSITE" id="PS00747">
    <property type="entry name" value="GLUTR"/>
    <property type="match status" value="1"/>
</dbReference>
<comment type="function">
    <text evidence="1">Catalyzes the NADPH-dependent reduction of glutamyl-tRNA(Glu) to glutamate 1-semialdehyde (GSA).</text>
</comment>
<comment type="catalytic activity">
    <reaction evidence="1">
        <text>(S)-4-amino-5-oxopentanoate + tRNA(Glu) + NADP(+) = L-glutamyl-tRNA(Glu) + NADPH + H(+)</text>
        <dbReference type="Rhea" id="RHEA:12344"/>
        <dbReference type="Rhea" id="RHEA-COMP:9663"/>
        <dbReference type="Rhea" id="RHEA-COMP:9680"/>
        <dbReference type="ChEBI" id="CHEBI:15378"/>
        <dbReference type="ChEBI" id="CHEBI:57501"/>
        <dbReference type="ChEBI" id="CHEBI:57783"/>
        <dbReference type="ChEBI" id="CHEBI:58349"/>
        <dbReference type="ChEBI" id="CHEBI:78442"/>
        <dbReference type="ChEBI" id="CHEBI:78520"/>
        <dbReference type="EC" id="1.2.1.70"/>
    </reaction>
</comment>
<comment type="pathway">
    <text evidence="1">Porphyrin-containing compound metabolism; protoporphyrin-IX biosynthesis; 5-aminolevulinate from L-glutamyl-tRNA(Glu): step 1/2.</text>
</comment>
<comment type="subunit">
    <text evidence="1">Homodimer.</text>
</comment>
<comment type="domain">
    <text evidence="1">Possesses an unusual extended V-shaped dimeric structure with each monomer consisting of three distinct domains arranged along a curved 'spinal' alpha-helix. The N-terminal catalytic domain specifically recognizes the glutamate moiety of the substrate. The second domain is the NADPH-binding domain, and the third C-terminal domain is responsible for dimerization.</text>
</comment>
<comment type="miscellaneous">
    <text evidence="1">During catalysis, the active site Cys acts as a nucleophile attacking the alpha-carbonyl group of tRNA-bound glutamate with the formation of a thioester intermediate between enzyme and glutamate, and the concomitant release of tRNA(Glu). The thioester intermediate is finally reduced by direct hydride transfer from NADPH, to form the product GSA.</text>
</comment>
<comment type="similarity">
    <text evidence="1">Belongs to the glutamyl-tRNA reductase family.</text>
</comment>
<evidence type="ECO:0000255" key="1">
    <source>
        <dbReference type="HAMAP-Rule" id="MF_00087"/>
    </source>
</evidence>
<sequence>MTLLALGINHKTAPVSLRERVSFSPDKLDQALDSLLAQPMVQGGVVLSTCNRTELYLSVEEQDNLQEALIRWLCDYHNLNEEDLRKSLYWHQDNDAVSHLMRVASGLDSLVLGEPQILGQVKKAFADSQKGHMKASELERMFQKSFSVAKRVRTETDIGASAVSVAFAACTLARQIFESLSTVTVLLVGAGETIELVARHLREHKVQKMIIANRTRERAQILADEVGAEVIALSEIDERLREADIIISSTASPLPIIGKGMVERALKSRRNQPMLLVDIAVPRDVEPEVGKLANAYLYSVDDLQSIISHNLAQRKAAAVEAETIVAQETSEFMAWLRAQSASETIREYRSQAEQVRDELTAKALAALEQGGDAQAIMQDLAWKLTNRLIHAPTKSLQQAARDGDNERLNILRDSLGLE</sequence>
<protein>
    <recommendedName>
        <fullName evidence="1">Glutamyl-tRNA reductase</fullName>
        <shortName evidence="1">GluTR</shortName>
        <ecNumber evidence="1">1.2.1.70</ecNumber>
    </recommendedName>
</protein>
<organism>
    <name type="scientific">Escherichia coli O9:H4 (strain HS)</name>
    <dbReference type="NCBI Taxonomy" id="331112"/>
    <lineage>
        <taxon>Bacteria</taxon>
        <taxon>Pseudomonadati</taxon>
        <taxon>Pseudomonadota</taxon>
        <taxon>Gammaproteobacteria</taxon>
        <taxon>Enterobacterales</taxon>
        <taxon>Enterobacteriaceae</taxon>
        <taxon>Escherichia</taxon>
    </lineage>
</organism>
<proteinExistence type="inferred from homology"/>
<reference key="1">
    <citation type="journal article" date="2008" name="J. Bacteriol.">
        <title>The pangenome structure of Escherichia coli: comparative genomic analysis of E. coli commensal and pathogenic isolates.</title>
        <authorList>
            <person name="Rasko D.A."/>
            <person name="Rosovitz M.J."/>
            <person name="Myers G.S.A."/>
            <person name="Mongodin E.F."/>
            <person name="Fricke W.F."/>
            <person name="Gajer P."/>
            <person name="Crabtree J."/>
            <person name="Sebaihia M."/>
            <person name="Thomson N.R."/>
            <person name="Chaudhuri R."/>
            <person name="Henderson I.R."/>
            <person name="Sperandio V."/>
            <person name="Ravel J."/>
        </authorList>
    </citation>
    <scope>NUCLEOTIDE SEQUENCE [LARGE SCALE GENOMIC DNA]</scope>
    <source>
        <strain>HS</strain>
    </source>
</reference>